<reference key="1">
    <citation type="journal article" date="2004" name="Nat. Genet.">
        <title>Comparison of genome degradation in Paratyphi A and Typhi, human-restricted serovars of Salmonella enterica that cause typhoid.</title>
        <authorList>
            <person name="McClelland M."/>
            <person name="Sanderson K.E."/>
            <person name="Clifton S.W."/>
            <person name="Latreille P."/>
            <person name="Porwollik S."/>
            <person name="Sabo A."/>
            <person name="Meyer R."/>
            <person name="Bieri T."/>
            <person name="Ozersky P."/>
            <person name="McLellan M."/>
            <person name="Harkins C.R."/>
            <person name="Wang C."/>
            <person name="Nguyen C."/>
            <person name="Berghoff A."/>
            <person name="Elliott G."/>
            <person name="Kohlberg S."/>
            <person name="Strong C."/>
            <person name="Du F."/>
            <person name="Carter J."/>
            <person name="Kremizki C."/>
            <person name="Layman D."/>
            <person name="Leonard S."/>
            <person name="Sun H."/>
            <person name="Fulton L."/>
            <person name="Nash W."/>
            <person name="Miner T."/>
            <person name="Minx P."/>
            <person name="Delehaunty K."/>
            <person name="Fronick C."/>
            <person name="Magrini V."/>
            <person name="Nhan M."/>
            <person name="Warren W."/>
            <person name="Florea L."/>
            <person name="Spieth J."/>
            <person name="Wilson R.K."/>
        </authorList>
    </citation>
    <scope>NUCLEOTIDE SEQUENCE [LARGE SCALE GENOMIC DNA]</scope>
    <source>
        <strain>ATCC 9150 / SARB42</strain>
    </source>
</reference>
<comment type="subcellular location">
    <subcellularLocation>
        <location evidence="1">Cell membrane</location>
        <topology evidence="1">Multi-pass membrane protein</topology>
    </subcellularLocation>
</comment>
<comment type="similarity">
    <text evidence="1">Belongs to the AAE transporter (TC 2.A.81) family. YidE subfamily.</text>
</comment>
<gene>
    <name evidence="1" type="primary">yidE</name>
    <name type="ordered locus">SPA3657</name>
</gene>
<dbReference type="EMBL" id="CP000026">
    <property type="protein sequence ID" value="AAV79451.1"/>
    <property type="molecule type" value="Genomic_DNA"/>
</dbReference>
<dbReference type="RefSeq" id="WP_001279793.1">
    <property type="nucleotide sequence ID" value="NC_006511.1"/>
</dbReference>
<dbReference type="SMR" id="Q5PKS7"/>
<dbReference type="KEGG" id="spt:SPA3657"/>
<dbReference type="HOGENOM" id="CLU_035023_3_1_6"/>
<dbReference type="Proteomes" id="UP000008185">
    <property type="component" value="Chromosome"/>
</dbReference>
<dbReference type="GO" id="GO:0005886">
    <property type="term" value="C:plasma membrane"/>
    <property type="evidence" value="ECO:0007669"/>
    <property type="project" value="UniProtKB-SubCell"/>
</dbReference>
<dbReference type="GO" id="GO:0008324">
    <property type="term" value="F:monoatomic cation transmembrane transporter activity"/>
    <property type="evidence" value="ECO:0007669"/>
    <property type="project" value="InterPro"/>
</dbReference>
<dbReference type="GO" id="GO:0006813">
    <property type="term" value="P:potassium ion transport"/>
    <property type="evidence" value="ECO:0007669"/>
    <property type="project" value="InterPro"/>
</dbReference>
<dbReference type="FunFam" id="3.30.70.1450:FF:000004">
    <property type="entry name" value="Putative transport protein YidE"/>
    <property type="match status" value="1"/>
</dbReference>
<dbReference type="Gene3D" id="3.30.70.1450">
    <property type="entry name" value="Regulator of K+ conductance, C-terminal domain"/>
    <property type="match status" value="2"/>
</dbReference>
<dbReference type="HAMAP" id="MF_01016">
    <property type="entry name" value="YidE"/>
    <property type="match status" value="1"/>
</dbReference>
<dbReference type="InterPro" id="IPR050144">
    <property type="entry name" value="AAE_transporter"/>
</dbReference>
<dbReference type="InterPro" id="IPR006037">
    <property type="entry name" value="RCK_C"/>
</dbReference>
<dbReference type="InterPro" id="IPR036721">
    <property type="entry name" value="RCK_C_sf"/>
</dbReference>
<dbReference type="InterPro" id="IPR023018">
    <property type="entry name" value="Transpt_YidE_put"/>
</dbReference>
<dbReference type="InterPro" id="IPR006512">
    <property type="entry name" value="YidE_YbjL"/>
</dbReference>
<dbReference type="NCBIfam" id="NF003007">
    <property type="entry name" value="PRK03818.1"/>
    <property type="match status" value="1"/>
</dbReference>
<dbReference type="NCBIfam" id="TIGR01625">
    <property type="entry name" value="YidE_YbjL_dupl"/>
    <property type="match status" value="2"/>
</dbReference>
<dbReference type="PANTHER" id="PTHR30445">
    <property type="entry name" value="K(+)_H(+) ANTIPORTER SUBUNIT KHTT"/>
    <property type="match status" value="1"/>
</dbReference>
<dbReference type="PANTHER" id="PTHR30445:SF3">
    <property type="entry name" value="TRANSPORT PROTEIN YIDE-RELATED"/>
    <property type="match status" value="1"/>
</dbReference>
<dbReference type="Pfam" id="PF06826">
    <property type="entry name" value="Asp-Al_Ex"/>
    <property type="match status" value="2"/>
</dbReference>
<dbReference type="Pfam" id="PF02080">
    <property type="entry name" value="TrkA_C"/>
    <property type="match status" value="2"/>
</dbReference>
<dbReference type="SUPFAM" id="SSF116726">
    <property type="entry name" value="TrkA C-terminal domain-like"/>
    <property type="match status" value="2"/>
</dbReference>
<dbReference type="PROSITE" id="PS51202">
    <property type="entry name" value="RCK_C"/>
    <property type="match status" value="2"/>
</dbReference>
<accession>Q5PKS7</accession>
<organism>
    <name type="scientific">Salmonella paratyphi A (strain ATCC 9150 / SARB42)</name>
    <dbReference type="NCBI Taxonomy" id="295319"/>
    <lineage>
        <taxon>Bacteria</taxon>
        <taxon>Pseudomonadati</taxon>
        <taxon>Pseudomonadota</taxon>
        <taxon>Gammaproteobacteria</taxon>
        <taxon>Enterobacterales</taxon>
        <taxon>Enterobacteriaceae</taxon>
        <taxon>Salmonella</taxon>
    </lineage>
</organism>
<feature type="chain" id="PRO_0000208804" description="Putative transport protein YidE">
    <location>
        <begin position="1"/>
        <end position="553"/>
    </location>
</feature>
<feature type="transmembrane region" description="Helical" evidence="1">
    <location>
        <begin position="4"/>
        <end position="24"/>
    </location>
</feature>
<feature type="transmembrane region" description="Helical" evidence="1">
    <location>
        <begin position="28"/>
        <end position="48"/>
    </location>
</feature>
<feature type="transmembrane region" description="Helical" evidence="1">
    <location>
        <begin position="65"/>
        <end position="85"/>
    </location>
</feature>
<feature type="transmembrane region" description="Helical" evidence="1">
    <location>
        <begin position="95"/>
        <end position="115"/>
    </location>
</feature>
<feature type="transmembrane region" description="Helical" evidence="1">
    <location>
        <begin position="158"/>
        <end position="178"/>
    </location>
</feature>
<feature type="transmembrane region" description="Helical" evidence="1">
    <location>
        <begin position="371"/>
        <end position="391"/>
    </location>
</feature>
<feature type="transmembrane region" description="Helical" evidence="1">
    <location>
        <begin position="393"/>
        <end position="413"/>
    </location>
</feature>
<feature type="transmembrane region" description="Helical" evidence="1">
    <location>
        <begin position="437"/>
        <end position="457"/>
    </location>
</feature>
<feature type="transmembrane region" description="Helical" evidence="1">
    <location>
        <begin position="464"/>
        <end position="484"/>
    </location>
</feature>
<feature type="transmembrane region" description="Helical" evidence="1">
    <location>
        <begin position="493"/>
        <end position="513"/>
    </location>
</feature>
<feature type="transmembrane region" description="Helical" evidence="1">
    <location>
        <begin position="533"/>
        <end position="553"/>
    </location>
</feature>
<feature type="domain" description="RCK C-terminal 1" evidence="1">
    <location>
        <begin position="192"/>
        <end position="276"/>
    </location>
</feature>
<feature type="domain" description="RCK C-terminal 2" evidence="1">
    <location>
        <begin position="279"/>
        <end position="361"/>
    </location>
</feature>
<keyword id="KW-1003">Cell membrane</keyword>
<keyword id="KW-0472">Membrane</keyword>
<keyword id="KW-0677">Repeat</keyword>
<keyword id="KW-0812">Transmembrane</keyword>
<keyword id="KW-1133">Transmembrane helix</keyword>
<keyword id="KW-0813">Transport</keyword>
<name>YIDE_SALPA</name>
<sequence length="553" mass="58893">MSDIALTVSVLALVAVVGLWIGNIKVRGVGFGIGGVLFGGIIVGHFVDQAGVTLSGDMLHFIQEFGLILFVYTIGIQVGPGFFASLRVSGLRLNLFAVLIVIMGGLVTAILHKIFAIPLPVVLGIFSGAVTNTPALGAGQQILRDLGTPVDLVDQMGMSYAMAYPFGICGILLTMWLMRLIFRVNVEAEAQKHESSLANGHSLIQTMNIRVENPNLNNMAIQDVPILNSDKIICSRLKRDDTLMVPSPGTIIQAGDLLHLVGQSTDLHNAQLVIGKEVDTSLSTRGTDLRVERVVVTNEKVLGKRIRDLHFKERYDVVISRLNRAGVELVASSDASLQFGDILNLVGRPASIDAVANVVGNAQQKLQQVQMLPVFIGIGLGVLLGSIPLFVPGFPVALKLGLAGGPLIMALILGRIGSIGKLYWFMPPSANLALRELGIVLFLAVVGLKSGGDFVDTLTQGEGLSWIGYGIFITAIPLITVGLLARIFAKMNYLTLCGMLAGSMTDPPALAFANNLHATSGAAALSYATVYPLVMFLRIITPQLLAVIFWGMG</sequence>
<protein>
    <recommendedName>
        <fullName evidence="1">Putative transport protein YidE</fullName>
    </recommendedName>
</protein>
<proteinExistence type="inferred from homology"/>
<evidence type="ECO:0000255" key="1">
    <source>
        <dbReference type="HAMAP-Rule" id="MF_01016"/>
    </source>
</evidence>